<proteinExistence type="inferred from homology"/>
<dbReference type="EMBL" id="AP008934">
    <property type="protein sequence ID" value="BAE18837.1"/>
    <property type="molecule type" value="Genomic_DNA"/>
</dbReference>
<dbReference type="RefSeq" id="WP_002483673.1">
    <property type="nucleotide sequence ID" value="NZ_MTGA01000039.1"/>
</dbReference>
<dbReference type="SMR" id="Q49WM2"/>
<dbReference type="KEGG" id="ssp:SSP1692"/>
<dbReference type="eggNOG" id="COG4476">
    <property type="taxonomic scope" value="Bacteria"/>
</dbReference>
<dbReference type="HOGENOM" id="CLU_166693_0_0_9"/>
<dbReference type="OrthoDB" id="1649074at2"/>
<dbReference type="Proteomes" id="UP000006371">
    <property type="component" value="Chromosome"/>
</dbReference>
<dbReference type="Gene3D" id="1.10.220.80">
    <property type="entry name" value="BH2638-like"/>
    <property type="match status" value="1"/>
</dbReference>
<dbReference type="HAMAP" id="MF_01041">
    <property type="entry name" value="UPF0223"/>
    <property type="match status" value="1"/>
</dbReference>
<dbReference type="InterPro" id="IPR023324">
    <property type="entry name" value="BH2638-like_sf"/>
</dbReference>
<dbReference type="InterPro" id="IPR007920">
    <property type="entry name" value="UPF0223"/>
</dbReference>
<dbReference type="NCBIfam" id="NF003353">
    <property type="entry name" value="PRK04387.1"/>
    <property type="match status" value="1"/>
</dbReference>
<dbReference type="Pfam" id="PF05256">
    <property type="entry name" value="UPF0223"/>
    <property type="match status" value="1"/>
</dbReference>
<dbReference type="PIRSF" id="PIRSF037260">
    <property type="entry name" value="UPF0223"/>
    <property type="match status" value="1"/>
</dbReference>
<dbReference type="SUPFAM" id="SSF158504">
    <property type="entry name" value="BH2638-like"/>
    <property type="match status" value="1"/>
</dbReference>
<comment type="similarity">
    <text evidence="1">Belongs to the UPF0223 family.</text>
</comment>
<reference key="1">
    <citation type="journal article" date="2005" name="Proc. Natl. Acad. Sci. U.S.A.">
        <title>Whole genome sequence of Staphylococcus saprophyticus reveals the pathogenesis of uncomplicated urinary tract infection.</title>
        <authorList>
            <person name="Kuroda M."/>
            <person name="Yamashita A."/>
            <person name="Hirakawa H."/>
            <person name="Kumano M."/>
            <person name="Morikawa K."/>
            <person name="Higashide M."/>
            <person name="Maruyama A."/>
            <person name="Inose Y."/>
            <person name="Matoba K."/>
            <person name="Toh H."/>
            <person name="Kuhara S."/>
            <person name="Hattori M."/>
            <person name="Ohta T."/>
        </authorList>
    </citation>
    <scope>NUCLEOTIDE SEQUENCE [LARGE SCALE GENOMIC DNA]</scope>
    <source>
        <strain>ATCC 15305 / DSM 20229 / NCIMB 8711 / NCTC 7292 / S-41</strain>
    </source>
</reference>
<protein>
    <recommendedName>
        <fullName evidence="1">UPF0223 protein SSP1692</fullName>
    </recommendedName>
</protein>
<gene>
    <name type="ordered locus">SSP1692</name>
</gene>
<keyword id="KW-1185">Reference proteome</keyword>
<sequence>MEYQYPIDLDWSNDEMMQVVSFFNAVESYYESSVEGEKLLDRYKQFKKIVPGKAEEKQIFKEFENSSGYSSYHAVKAVQSSPDQKLFSAKSK</sequence>
<name>Y1692_STAS1</name>
<organism>
    <name type="scientific">Staphylococcus saprophyticus subsp. saprophyticus (strain ATCC 15305 / DSM 20229 / NCIMB 8711 / NCTC 7292 / S-41)</name>
    <dbReference type="NCBI Taxonomy" id="342451"/>
    <lineage>
        <taxon>Bacteria</taxon>
        <taxon>Bacillati</taxon>
        <taxon>Bacillota</taxon>
        <taxon>Bacilli</taxon>
        <taxon>Bacillales</taxon>
        <taxon>Staphylococcaceae</taxon>
        <taxon>Staphylococcus</taxon>
    </lineage>
</organism>
<accession>Q49WM2</accession>
<feature type="chain" id="PRO_0000216692" description="UPF0223 protein SSP1692">
    <location>
        <begin position="1"/>
        <end position="92"/>
    </location>
</feature>
<evidence type="ECO:0000255" key="1">
    <source>
        <dbReference type="HAMAP-Rule" id="MF_01041"/>
    </source>
</evidence>